<evidence type="ECO:0000255" key="1">
    <source>
        <dbReference type="HAMAP-Rule" id="MF_00600"/>
    </source>
</evidence>
<accession>Q0RB64</accession>
<protein>
    <recommendedName>
        <fullName evidence="1">Chaperonin GroEL 4</fullName>
        <ecNumber evidence="1">5.6.1.7</ecNumber>
    </recommendedName>
    <alternativeName>
        <fullName evidence="1">60 kDa chaperonin 4</fullName>
    </alternativeName>
    <alternativeName>
        <fullName evidence="1">Chaperonin-60 4</fullName>
        <shortName evidence="1">Cpn60 4</shortName>
    </alternativeName>
</protein>
<comment type="function">
    <text evidence="1">Together with its co-chaperonin GroES, plays an essential role in assisting protein folding. The GroEL-GroES system forms a nano-cage that allows encapsulation of the non-native substrate proteins and provides a physical environment optimized to promote and accelerate protein folding.</text>
</comment>
<comment type="catalytic activity">
    <reaction evidence="1">
        <text>ATP + H2O + a folded polypeptide = ADP + phosphate + an unfolded polypeptide.</text>
        <dbReference type="EC" id="5.6.1.7"/>
    </reaction>
</comment>
<comment type="subunit">
    <text evidence="1">Forms a cylinder of 14 subunits composed of two heptameric rings stacked back-to-back. Interacts with the co-chaperonin GroES.</text>
</comment>
<comment type="subcellular location">
    <subcellularLocation>
        <location evidence="1">Cytoplasm</location>
    </subcellularLocation>
</comment>
<comment type="similarity">
    <text evidence="1">Belongs to the chaperonin (HSP60) family.</text>
</comment>
<organism>
    <name type="scientific">Frankia alni (strain DSM 45986 / CECT 9034 / ACN14a)</name>
    <dbReference type="NCBI Taxonomy" id="326424"/>
    <lineage>
        <taxon>Bacteria</taxon>
        <taxon>Bacillati</taxon>
        <taxon>Actinomycetota</taxon>
        <taxon>Actinomycetes</taxon>
        <taxon>Frankiales</taxon>
        <taxon>Frankiaceae</taxon>
        <taxon>Frankia</taxon>
    </lineage>
</organism>
<keyword id="KW-0067">ATP-binding</keyword>
<keyword id="KW-0143">Chaperone</keyword>
<keyword id="KW-0963">Cytoplasm</keyword>
<keyword id="KW-0413">Isomerase</keyword>
<keyword id="KW-0547">Nucleotide-binding</keyword>
<keyword id="KW-1185">Reference proteome</keyword>
<name>CH604_FRAAA</name>
<feature type="chain" id="PRO_0000332005" description="Chaperonin GroEL 4">
    <location>
        <begin position="1"/>
        <end position="540"/>
    </location>
</feature>
<feature type="binding site" evidence="1">
    <location>
        <begin position="29"/>
        <end position="32"/>
    </location>
    <ligand>
        <name>ATP</name>
        <dbReference type="ChEBI" id="CHEBI:30616"/>
    </ligand>
</feature>
<feature type="binding site" evidence="1">
    <location>
        <begin position="86"/>
        <end position="90"/>
    </location>
    <ligand>
        <name>ATP</name>
        <dbReference type="ChEBI" id="CHEBI:30616"/>
    </ligand>
</feature>
<feature type="binding site" evidence="1">
    <location>
        <position position="413"/>
    </location>
    <ligand>
        <name>ATP</name>
        <dbReference type="ChEBI" id="CHEBI:30616"/>
    </ligand>
</feature>
<feature type="binding site" evidence="1">
    <location>
        <begin position="477"/>
        <end position="479"/>
    </location>
    <ligand>
        <name>ATP</name>
        <dbReference type="ChEBI" id="CHEBI:30616"/>
    </ligand>
</feature>
<feature type="binding site" evidence="1">
    <location>
        <position position="493"/>
    </location>
    <ligand>
        <name>ATP</name>
        <dbReference type="ChEBI" id="CHEBI:30616"/>
    </ligand>
</feature>
<sequence>MPKIIAFDEEARRGLERGMNQLADAVKVTLGPKGRNVVLEKKWGVPTITNDGVSIAKEIELEDPYEKIGAELVKEVAKKTNDVAGDGTTTATILAQALVREGLRNVAAGANPLGLKKGIEVAVERVSEELSKQAKEVETKEQIASTASISAGDSAIGGLIAEALDKVGKEGVVTVEESNTFGLELELTEGMRFDKGYISPYFVTDADRQEAVLDDPYILIVNSKIAAVKDLLPLLEKVMQTSKPLVIISEDVEGEALATLVVNKIRGTFKSVAVKAPGFGDRRKAILGDIAILTGGQVISEDVGLKLESTSLDLLGRARKIVVTKDETTVVEGSGDPDQIAGRVSQIRNEIDKSDSDYDREKLQERLAKLAGGVAVIKVGAATEVELKEKKHRIEDAVSNAKAAVEEGIVAGGGVALLQASITAFEKLDLSGDEATGANIVRLALEAPIKQIAFNSGLEGGVVVDKVRNLPTGHGLNAATGEYVDLIATGIIDPAKVTRSALQNAASIAGLFLTTEAVIADKPEKNPAPAVPGGGGEMDF</sequence>
<proteinExistence type="inferred from homology"/>
<reference key="1">
    <citation type="journal article" date="2007" name="Genome Res.">
        <title>Genome characteristics of facultatively symbiotic Frankia sp. strains reflect host range and host plant biogeography.</title>
        <authorList>
            <person name="Normand P."/>
            <person name="Lapierre P."/>
            <person name="Tisa L.S."/>
            <person name="Gogarten J.P."/>
            <person name="Alloisio N."/>
            <person name="Bagnarol E."/>
            <person name="Bassi C.A."/>
            <person name="Berry A.M."/>
            <person name="Bickhart D.M."/>
            <person name="Choisne N."/>
            <person name="Couloux A."/>
            <person name="Cournoyer B."/>
            <person name="Cruveiller S."/>
            <person name="Daubin V."/>
            <person name="Demange N."/>
            <person name="Francino M.P."/>
            <person name="Goltsman E."/>
            <person name="Huang Y."/>
            <person name="Kopp O.R."/>
            <person name="Labarre L."/>
            <person name="Lapidus A."/>
            <person name="Lavire C."/>
            <person name="Marechal J."/>
            <person name="Martinez M."/>
            <person name="Mastronunzio J.E."/>
            <person name="Mullin B.C."/>
            <person name="Niemann J."/>
            <person name="Pujic P."/>
            <person name="Rawnsley T."/>
            <person name="Rouy Z."/>
            <person name="Schenowitz C."/>
            <person name="Sellstedt A."/>
            <person name="Tavares F."/>
            <person name="Tomkins J.P."/>
            <person name="Vallenet D."/>
            <person name="Valverde C."/>
            <person name="Wall L.G."/>
            <person name="Wang Y."/>
            <person name="Medigue C."/>
            <person name="Benson D.R."/>
        </authorList>
    </citation>
    <scope>NUCLEOTIDE SEQUENCE [LARGE SCALE GENOMIC DNA]</scope>
    <source>
        <strain>DSM 45986 / CECT 9034 / ACN14a</strain>
    </source>
</reference>
<gene>
    <name evidence="1" type="primary">groEL4</name>
    <name evidence="1" type="synonym">groL4</name>
    <name type="ordered locus">FRAAL6701</name>
</gene>
<dbReference type="EC" id="5.6.1.7" evidence="1"/>
<dbReference type="EMBL" id="CT573213">
    <property type="protein sequence ID" value="CAJ65324.1"/>
    <property type="molecule type" value="Genomic_DNA"/>
</dbReference>
<dbReference type="RefSeq" id="WP_011607738.1">
    <property type="nucleotide sequence ID" value="NC_008278.1"/>
</dbReference>
<dbReference type="SMR" id="Q0RB64"/>
<dbReference type="STRING" id="326424.FRAAL6701"/>
<dbReference type="KEGG" id="fal:FRAAL6701"/>
<dbReference type="eggNOG" id="COG0459">
    <property type="taxonomic scope" value="Bacteria"/>
</dbReference>
<dbReference type="HOGENOM" id="CLU_016503_3_0_11"/>
<dbReference type="OrthoDB" id="9766614at2"/>
<dbReference type="Proteomes" id="UP000000657">
    <property type="component" value="Chromosome"/>
</dbReference>
<dbReference type="GO" id="GO:0005737">
    <property type="term" value="C:cytoplasm"/>
    <property type="evidence" value="ECO:0007669"/>
    <property type="project" value="UniProtKB-SubCell"/>
</dbReference>
<dbReference type="GO" id="GO:0005524">
    <property type="term" value="F:ATP binding"/>
    <property type="evidence" value="ECO:0007669"/>
    <property type="project" value="UniProtKB-UniRule"/>
</dbReference>
<dbReference type="GO" id="GO:0140662">
    <property type="term" value="F:ATP-dependent protein folding chaperone"/>
    <property type="evidence" value="ECO:0007669"/>
    <property type="project" value="InterPro"/>
</dbReference>
<dbReference type="GO" id="GO:0016853">
    <property type="term" value="F:isomerase activity"/>
    <property type="evidence" value="ECO:0007669"/>
    <property type="project" value="UniProtKB-KW"/>
</dbReference>
<dbReference type="GO" id="GO:0051082">
    <property type="term" value="F:unfolded protein binding"/>
    <property type="evidence" value="ECO:0007669"/>
    <property type="project" value="UniProtKB-UniRule"/>
</dbReference>
<dbReference type="GO" id="GO:0042026">
    <property type="term" value="P:protein refolding"/>
    <property type="evidence" value="ECO:0007669"/>
    <property type="project" value="UniProtKB-UniRule"/>
</dbReference>
<dbReference type="CDD" id="cd03344">
    <property type="entry name" value="GroEL"/>
    <property type="match status" value="1"/>
</dbReference>
<dbReference type="FunFam" id="3.50.7.10:FF:000001">
    <property type="entry name" value="60 kDa chaperonin"/>
    <property type="match status" value="1"/>
</dbReference>
<dbReference type="Gene3D" id="3.50.7.10">
    <property type="entry name" value="GroEL"/>
    <property type="match status" value="1"/>
</dbReference>
<dbReference type="Gene3D" id="1.10.560.10">
    <property type="entry name" value="GroEL-like equatorial domain"/>
    <property type="match status" value="1"/>
</dbReference>
<dbReference type="Gene3D" id="3.30.260.10">
    <property type="entry name" value="TCP-1-like chaperonin intermediate domain"/>
    <property type="match status" value="1"/>
</dbReference>
<dbReference type="HAMAP" id="MF_00600">
    <property type="entry name" value="CH60"/>
    <property type="match status" value="1"/>
</dbReference>
<dbReference type="InterPro" id="IPR018370">
    <property type="entry name" value="Chaperonin_Cpn60_CS"/>
</dbReference>
<dbReference type="InterPro" id="IPR001844">
    <property type="entry name" value="Cpn60/GroEL"/>
</dbReference>
<dbReference type="InterPro" id="IPR002423">
    <property type="entry name" value="Cpn60/GroEL/TCP-1"/>
</dbReference>
<dbReference type="InterPro" id="IPR027409">
    <property type="entry name" value="GroEL-like_apical_dom_sf"/>
</dbReference>
<dbReference type="InterPro" id="IPR027413">
    <property type="entry name" value="GROEL-like_equatorial_sf"/>
</dbReference>
<dbReference type="InterPro" id="IPR027410">
    <property type="entry name" value="TCP-1-like_intermed_sf"/>
</dbReference>
<dbReference type="NCBIfam" id="TIGR02348">
    <property type="entry name" value="GroEL"/>
    <property type="match status" value="1"/>
</dbReference>
<dbReference type="NCBIfam" id="NF000592">
    <property type="entry name" value="PRK00013.1"/>
    <property type="match status" value="1"/>
</dbReference>
<dbReference type="NCBIfam" id="NF009487">
    <property type="entry name" value="PRK12849.1"/>
    <property type="match status" value="1"/>
</dbReference>
<dbReference type="NCBIfam" id="NF009488">
    <property type="entry name" value="PRK12850.1"/>
    <property type="match status" value="1"/>
</dbReference>
<dbReference type="NCBIfam" id="NF009489">
    <property type="entry name" value="PRK12851.1"/>
    <property type="match status" value="1"/>
</dbReference>
<dbReference type="PANTHER" id="PTHR45633">
    <property type="entry name" value="60 KDA HEAT SHOCK PROTEIN, MITOCHONDRIAL"/>
    <property type="match status" value="1"/>
</dbReference>
<dbReference type="Pfam" id="PF00118">
    <property type="entry name" value="Cpn60_TCP1"/>
    <property type="match status" value="1"/>
</dbReference>
<dbReference type="PRINTS" id="PR00298">
    <property type="entry name" value="CHAPERONIN60"/>
</dbReference>
<dbReference type="SUPFAM" id="SSF52029">
    <property type="entry name" value="GroEL apical domain-like"/>
    <property type="match status" value="1"/>
</dbReference>
<dbReference type="SUPFAM" id="SSF48592">
    <property type="entry name" value="GroEL equatorial domain-like"/>
    <property type="match status" value="1"/>
</dbReference>
<dbReference type="SUPFAM" id="SSF54849">
    <property type="entry name" value="GroEL-intermediate domain like"/>
    <property type="match status" value="1"/>
</dbReference>
<dbReference type="PROSITE" id="PS00296">
    <property type="entry name" value="CHAPERONINS_CPN60"/>
    <property type="match status" value="1"/>
</dbReference>